<name>RL19_KLEP3</name>
<gene>
    <name evidence="1" type="primary">rplS</name>
    <name type="ordered locus">KPK_1191</name>
</gene>
<proteinExistence type="inferred from homology"/>
<reference key="1">
    <citation type="journal article" date="2008" name="PLoS Genet.">
        <title>Complete genome sequence of the N2-fixing broad host range endophyte Klebsiella pneumoniae 342 and virulence predictions verified in mice.</title>
        <authorList>
            <person name="Fouts D.E."/>
            <person name="Tyler H.L."/>
            <person name="DeBoy R.T."/>
            <person name="Daugherty S."/>
            <person name="Ren Q."/>
            <person name="Badger J.H."/>
            <person name="Durkin A.S."/>
            <person name="Huot H."/>
            <person name="Shrivastava S."/>
            <person name="Kothari S."/>
            <person name="Dodson R.J."/>
            <person name="Mohamoud Y."/>
            <person name="Khouri H."/>
            <person name="Roesch L.F.W."/>
            <person name="Krogfelt K.A."/>
            <person name="Struve C."/>
            <person name="Triplett E.W."/>
            <person name="Methe B.A."/>
        </authorList>
    </citation>
    <scope>NUCLEOTIDE SEQUENCE [LARGE SCALE GENOMIC DNA]</scope>
    <source>
        <strain>342</strain>
    </source>
</reference>
<dbReference type="EMBL" id="CP000964">
    <property type="protein sequence ID" value="ACI10699.1"/>
    <property type="molecule type" value="Genomic_DNA"/>
</dbReference>
<dbReference type="SMR" id="B5XVK6"/>
<dbReference type="KEGG" id="kpe:KPK_1191"/>
<dbReference type="HOGENOM" id="CLU_103507_2_1_6"/>
<dbReference type="Proteomes" id="UP000001734">
    <property type="component" value="Chromosome"/>
</dbReference>
<dbReference type="GO" id="GO:0022625">
    <property type="term" value="C:cytosolic large ribosomal subunit"/>
    <property type="evidence" value="ECO:0007669"/>
    <property type="project" value="TreeGrafter"/>
</dbReference>
<dbReference type="GO" id="GO:0003735">
    <property type="term" value="F:structural constituent of ribosome"/>
    <property type="evidence" value="ECO:0007669"/>
    <property type="project" value="InterPro"/>
</dbReference>
<dbReference type="GO" id="GO:0006412">
    <property type="term" value="P:translation"/>
    <property type="evidence" value="ECO:0007669"/>
    <property type="project" value="UniProtKB-UniRule"/>
</dbReference>
<dbReference type="FunFam" id="2.30.30.790:FF:000001">
    <property type="entry name" value="50S ribosomal protein L19"/>
    <property type="match status" value="1"/>
</dbReference>
<dbReference type="Gene3D" id="2.30.30.790">
    <property type="match status" value="1"/>
</dbReference>
<dbReference type="HAMAP" id="MF_00402">
    <property type="entry name" value="Ribosomal_bL19"/>
    <property type="match status" value="1"/>
</dbReference>
<dbReference type="InterPro" id="IPR001857">
    <property type="entry name" value="Ribosomal_bL19"/>
</dbReference>
<dbReference type="InterPro" id="IPR018257">
    <property type="entry name" value="Ribosomal_bL19_CS"/>
</dbReference>
<dbReference type="InterPro" id="IPR038657">
    <property type="entry name" value="Ribosomal_bL19_sf"/>
</dbReference>
<dbReference type="InterPro" id="IPR008991">
    <property type="entry name" value="Translation_prot_SH3-like_sf"/>
</dbReference>
<dbReference type="NCBIfam" id="TIGR01024">
    <property type="entry name" value="rplS_bact"/>
    <property type="match status" value="1"/>
</dbReference>
<dbReference type="PANTHER" id="PTHR15680:SF9">
    <property type="entry name" value="LARGE RIBOSOMAL SUBUNIT PROTEIN BL19M"/>
    <property type="match status" value="1"/>
</dbReference>
<dbReference type="PANTHER" id="PTHR15680">
    <property type="entry name" value="RIBOSOMAL PROTEIN L19"/>
    <property type="match status" value="1"/>
</dbReference>
<dbReference type="Pfam" id="PF01245">
    <property type="entry name" value="Ribosomal_L19"/>
    <property type="match status" value="1"/>
</dbReference>
<dbReference type="PIRSF" id="PIRSF002191">
    <property type="entry name" value="Ribosomal_L19"/>
    <property type="match status" value="1"/>
</dbReference>
<dbReference type="PRINTS" id="PR00061">
    <property type="entry name" value="RIBOSOMALL19"/>
</dbReference>
<dbReference type="SUPFAM" id="SSF50104">
    <property type="entry name" value="Translation proteins SH3-like domain"/>
    <property type="match status" value="1"/>
</dbReference>
<dbReference type="PROSITE" id="PS01015">
    <property type="entry name" value="RIBOSOMAL_L19"/>
    <property type="match status" value="1"/>
</dbReference>
<feature type="chain" id="PRO_1000193852" description="Large ribosomal subunit protein bL19">
    <location>
        <begin position="1"/>
        <end position="115"/>
    </location>
</feature>
<keyword id="KW-0687">Ribonucleoprotein</keyword>
<keyword id="KW-0689">Ribosomal protein</keyword>
<evidence type="ECO:0000255" key="1">
    <source>
        <dbReference type="HAMAP-Rule" id="MF_00402"/>
    </source>
</evidence>
<evidence type="ECO:0000305" key="2"/>
<comment type="function">
    <text evidence="1">This protein is located at the 30S-50S ribosomal subunit interface and may play a role in the structure and function of the aminoacyl-tRNA binding site.</text>
</comment>
<comment type="similarity">
    <text evidence="1">Belongs to the bacterial ribosomal protein bL19 family.</text>
</comment>
<protein>
    <recommendedName>
        <fullName evidence="1">Large ribosomal subunit protein bL19</fullName>
    </recommendedName>
    <alternativeName>
        <fullName evidence="2">50S ribosomal protein L19</fullName>
    </alternativeName>
</protein>
<accession>B5XVK6</accession>
<organism>
    <name type="scientific">Klebsiella pneumoniae (strain 342)</name>
    <dbReference type="NCBI Taxonomy" id="507522"/>
    <lineage>
        <taxon>Bacteria</taxon>
        <taxon>Pseudomonadati</taxon>
        <taxon>Pseudomonadota</taxon>
        <taxon>Gammaproteobacteria</taxon>
        <taxon>Enterobacterales</taxon>
        <taxon>Enterobacteriaceae</taxon>
        <taxon>Klebsiella/Raoultella group</taxon>
        <taxon>Klebsiella</taxon>
        <taxon>Klebsiella pneumoniae complex</taxon>
    </lineage>
</organism>
<sequence>MSNIIKQLEQEQMKQDVPSFRPGDTVEVKVWVVEGSKKRLQAFEGVVIAIRNRGLHSAFTVRKISNGEGVERVFQTHSPVVDSIAVKRRGAVRKAKLYYLRERTGKSARIKERLN</sequence>